<keyword id="KW-0002">3D-structure</keyword>
<keyword id="KW-0007">Acetylation</keyword>
<keyword id="KW-0963">Cytoplasm</keyword>
<keyword id="KW-0479">Metal-binding</keyword>
<keyword id="KW-0489">Methyltransferase</keyword>
<keyword id="KW-0539">Nucleus</keyword>
<keyword id="KW-0597">Phosphoprotein</keyword>
<keyword id="KW-1185">Reference proteome</keyword>
<keyword id="KW-0949">S-adenosyl-L-methionine</keyword>
<keyword id="KW-0808">Transferase</keyword>
<keyword id="KW-0862">Zinc</keyword>
<keyword id="KW-0863">Zinc-finger</keyword>
<proteinExistence type="evidence at protein level"/>
<sequence>MCSLAAGNGQGAELGPEPLELSDSGDDAGWEDEDADAEPAQGRQHTPCLFCDRLFRSAEETFSHCKLEHQFNIDGMVHKHGLEFYGYIKLINFIRLKNPTVEYMNSIYNPVPWDKDEYLKPVLEDDLLLQFDVEDLYEPVSAPFTYPNGLSENTSAVEKLKLMEARALSAEAALARAREDLQKMKQFAQDFVMNVDVRTCSSTTTIADLQEDEDGVYFSSYGHYGIHEEMLKDKVRTESYRDFIYQNPHIFKDKVVLDVGCGTGILSMFAAKAGAKKVIAVDQSEILYQAMDIIRLNKLEDTIVLIKGKIEEVSLPVEKVDVIISEWMGYFLLFESMLDSVLYAKSKYLAKGGSVYPDICTISLVAVSDVSKHADRIAFWDDVYGFNMSCMKKAVIPEAVVEVVDHKTLISDPCDIKHIDCHTTSISDLEFSSDFTLRTTKTAMCTAVAGYFDIYFEKNCHNRVVFSTGPQSTKTHWKQTIFLLEKPFPVKAGEALKGKITVHKNKKDPRSLIVTLTLNSSTQTYSLQ</sequence>
<organism>
    <name type="scientific">Rattus norvegicus</name>
    <name type="common">Rat</name>
    <dbReference type="NCBI Taxonomy" id="10116"/>
    <lineage>
        <taxon>Eukaryota</taxon>
        <taxon>Metazoa</taxon>
        <taxon>Chordata</taxon>
        <taxon>Craniata</taxon>
        <taxon>Vertebrata</taxon>
        <taxon>Euteleostomi</taxon>
        <taxon>Mammalia</taxon>
        <taxon>Eutheria</taxon>
        <taxon>Euarchontoglires</taxon>
        <taxon>Glires</taxon>
        <taxon>Rodentia</taxon>
        <taxon>Myomorpha</taxon>
        <taxon>Muroidea</taxon>
        <taxon>Muridae</taxon>
        <taxon>Murinae</taxon>
        <taxon>Rattus</taxon>
    </lineage>
</organism>
<name>ANM3_RAT</name>
<evidence type="ECO:0000250" key="1">
    <source>
        <dbReference type="UniProtKB" id="O60678"/>
    </source>
</evidence>
<evidence type="ECO:0000250" key="2">
    <source>
        <dbReference type="UniProtKB" id="Q922H1"/>
    </source>
</evidence>
<evidence type="ECO:0000255" key="3">
    <source>
        <dbReference type="PROSITE-ProRule" id="PRU01015"/>
    </source>
</evidence>
<evidence type="ECO:0000256" key="4">
    <source>
        <dbReference type="SAM" id="MobiDB-lite"/>
    </source>
</evidence>
<evidence type="ECO:0000269" key="5">
    <source>
    </source>
</evidence>
<evidence type="ECO:0000269" key="6">
    <source>
    </source>
</evidence>
<evidence type="ECO:0000269" key="7">
    <source>
    </source>
</evidence>
<evidence type="ECO:0000269" key="8">
    <source>
    </source>
</evidence>
<evidence type="ECO:0000305" key="9">
    <source>
    </source>
</evidence>
<evidence type="ECO:0000312" key="10">
    <source>
        <dbReference type="RGD" id="620413"/>
    </source>
</evidence>
<evidence type="ECO:0007744" key="11">
    <source>
        <dbReference type="PDB" id="1F3L"/>
    </source>
</evidence>
<evidence type="ECO:0007829" key="12">
    <source>
        <dbReference type="PDB" id="1F3L"/>
    </source>
</evidence>
<dbReference type="EC" id="2.1.1.319" evidence="8"/>
<dbReference type="EMBL" id="AF059530">
    <property type="protein sequence ID" value="AAC40158.1"/>
    <property type="molecule type" value="mRNA"/>
</dbReference>
<dbReference type="RefSeq" id="NP_446009.1">
    <property type="nucleotide sequence ID" value="NM_053557.2"/>
</dbReference>
<dbReference type="PDB" id="1F3L">
    <property type="method" value="X-ray"/>
    <property type="resolution" value="2.03 A"/>
    <property type="chains" value="A=208-528"/>
</dbReference>
<dbReference type="PDBsum" id="1F3L"/>
<dbReference type="SMR" id="O70467"/>
<dbReference type="FunCoup" id="O70467">
    <property type="interactions" value="2488"/>
</dbReference>
<dbReference type="IntAct" id="O70467">
    <property type="interactions" value="1"/>
</dbReference>
<dbReference type="STRING" id="10116.ENSRNOP00000069745"/>
<dbReference type="iPTMnet" id="O70467"/>
<dbReference type="PhosphoSitePlus" id="O70467"/>
<dbReference type="jPOST" id="O70467"/>
<dbReference type="PaxDb" id="10116-ENSRNOP00000020853"/>
<dbReference type="GeneID" id="89820"/>
<dbReference type="KEGG" id="rno:89820"/>
<dbReference type="UCSC" id="RGD:620413">
    <property type="organism name" value="rat"/>
</dbReference>
<dbReference type="AGR" id="RGD:620413"/>
<dbReference type="CTD" id="10196"/>
<dbReference type="RGD" id="620413">
    <property type="gene designation" value="Prmt3"/>
</dbReference>
<dbReference type="VEuPathDB" id="HostDB:ENSRNOG00000014829"/>
<dbReference type="eggNOG" id="KOG1499">
    <property type="taxonomic scope" value="Eukaryota"/>
</dbReference>
<dbReference type="HOGENOM" id="CLU_017375_6_2_1"/>
<dbReference type="InParanoid" id="O70467"/>
<dbReference type="OrthoDB" id="35559at9989"/>
<dbReference type="PhylomeDB" id="O70467"/>
<dbReference type="BRENDA" id="2.1.1.319">
    <property type="organism ID" value="5301"/>
</dbReference>
<dbReference type="Reactome" id="R-RNO-3214858">
    <property type="pathway name" value="RMTs methylate histone arginines"/>
</dbReference>
<dbReference type="Reactome" id="R-RNO-8876725">
    <property type="pathway name" value="Protein methylation"/>
</dbReference>
<dbReference type="EvolutionaryTrace" id="O70467"/>
<dbReference type="PRO" id="PR:O70467"/>
<dbReference type="Proteomes" id="UP000002494">
    <property type="component" value="Chromosome 1"/>
</dbReference>
<dbReference type="Bgee" id="ENSRNOG00000014829">
    <property type="expression patterns" value="Expressed in quadriceps femoris and 19 other cell types or tissues"/>
</dbReference>
<dbReference type="ExpressionAtlas" id="O70467">
    <property type="expression patterns" value="baseline and differential"/>
</dbReference>
<dbReference type="GO" id="GO:0005737">
    <property type="term" value="C:cytoplasm"/>
    <property type="evidence" value="ECO:0000266"/>
    <property type="project" value="RGD"/>
</dbReference>
<dbReference type="GO" id="GO:0005829">
    <property type="term" value="C:cytosol"/>
    <property type="evidence" value="ECO:0000266"/>
    <property type="project" value="RGD"/>
</dbReference>
<dbReference type="GO" id="GO:0005634">
    <property type="term" value="C:nucleus"/>
    <property type="evidence" value="ECO:0000266"/>
    <property type="project" value="RGD"/>
</dbReference>
<dbReference type="GO" id="GO:0044020">
    <property type="term" value="F:histone H4R3 methyltransferase activity"/>
    <property type="evidence" value="ECO:0000266"/>
    <property type="project" value="RGD"/>
</dbReference>
<dbReference type="GO" id="GO:0042054">
    <property type="term" value="F:histone methyltransferase activity"/>
    <property type="evidence" value="ECO:0000318"/>
    <property type="project" value="GO_Central"/>
</dbReference>
<dbReference type="GO" id="GO:0008168">
    <property type="term" value="F:methyltransferase activity"/>
    <property type="evidence" value="ECO:0000266"/>
    <property type="project" value="RGD"/>
</dbReference>
<dbReference type="GO" id="GO:0072341">
    <property type="term" value="F:modified amino acid binding"/>
    <property type="evidence" value="ECO:0000314"/>
    <property type="project" value="RGD"/>
</dbReference>
<dbReference type="GO" id="GO:0016274">
    <property type="term" value="F:protein-arginine N-methyltransferase activity"/>
    <property type="evidence" value="ECO:0000314"/>
    <property type="project" value="RGD"/>
</dbReference>
<dbReference type="GO" id="GO:0035242">
    <property type="term" value="F:protein-arginine omega-N asymmetric methyltransferase activity"/>
    <property type="evidence" value="ECO:0000314"/>
    <property type="project" value="RGD"/>
</dbReference>
<dbReference type="GO" id="GO:0035241">
    <property type="term" value="F:protein-arginine omega-N monomethyltransferase activity"/>
    <property type="evidence" value="ECO:0007669"/>
    <property type="project" value="RHEA"/>
</dbReference>
<dbReference type="GO" id="GO:0043022">
    <property type="term" value="F:ribosome binding"/>
    <property type="evidence" value="ECO:0000266"/>
    <property type="project" value="RGD"/>
</dbReference>
<dbReference type="GO" id="GO:0008757">
    <property type="term" value="F:S-adenosylmethionine-dependent methyltransferase activity"/>
    <property type="evidence" value="ECO:0000304"/>
    <property type="project" value="RGD"/>
</dbReference>
<dbReference type="GO" id="GO:0008270">
    <property type="term" value="F:zinc ion binding"/>
    <property type="evidence" value="ECO:0007669"/>
    <property type="project" value="UniProtKB-KW"/>
</dbReference>
<dbReference type="GO" id="GO:0006338">
    <property type="term" value="P:chromatin remodeling"/>
    <property type="evidence" value="ECO:0000318"/>
    <property type="project" value="GO_Central"/>
</dbReference>
<dbReference type="GO" id="GO:0060997">
    <property type="term" value="P:dendritic spine morphogenesis"/>
    <property type="evidence" value="ECO:0000315"/>
    <property type="project" value="RGD"/>
</dbReference>
<dbReference type="GO" id="GO:0032259">
    <property type="term" value="P:methylation"/>
    <property type="evidence" value="ECO:0007669"/>
    <property type="project" value="UniProtKB-KW"/>
</dbReference>
<dbReference type="GO" id="GO:0031397">
    <property type="term" value="P:negative regulation of protein ubiquitination"/>
    <property type="evidence" value="ECO:0000266"/>
    <property type="project" value="RGD"/>
</dbReference>
<dbReference type="GO" id="GO:1900053">
    <property type="term" value="P:negative regulation of retinoic acid biosynthetic process"/>
    <property type="evidence" value="ECO:0000250"/>
    <property type="project" value="UniProtKB"/>
</dbReference>
<dbReference type="GO" id="GO:0045669">
    <property type="term" value="P:positive regulation of osteoblast differentiation"/>
    <property type="evidence" value="ECO:0000266"/>
    <property type="project" value="RGD"/>
</dbReference>
<dbReference type="GO" id="GO:0006355">
    <property type="term" value="P:regulation of DNA-templated transcription"/>
    <property type="evidence" value="ECO:0000318"/>
    <property type="project" value="GO_Central"/>
</dbReference>
<dbReference type="GO" id="GO:0045815">
    <property type="term" value="P:transcription initiation-coupled chromatin remodeling"/>
    <property type="evidence" value="ECO:0000266"/>
    <property type="project" value="RGD"/>
</dbReference>
<dbReference type="CDD" id="cd02440">
    <property type="entry name" value="AdoMet_MTases"/>
    <property type="match status" value="1"/>
</dbReference>
<dbReference type="FunFam" id="3.40.50.150:FF:000034">
    <property type="entry name" value="Protein arginine N-methyltransferase 3"/>
    <property type="match status" value="1"/>
</dbReference>
<dbReference type="FunFam" id="2.70.160.11:FF:000005">
    <property type="entry name" value="protein arginine N-methyltransferase 3 isoform X2"/>
    <property type="match status" value="1"/>
</dbReference>
<dbReference type="Gene3D" id="2.70.160.11">
    <property type="entry name" value="Hnrnp arginine n-methyltransferase1"/>
    <property type="match status" value="1"/>
</dbReference>
<dbReference type="Gene3D" id="3.40.50.150">
    <property type="entry name" value="Vaccinia Virus protein VP39"/>
    <property type="match status" value="1"/>
</dbReference>
<dbReference type="InterPro" id="IPR049482">
    <property type="entry name" value="ANM3-like_C2H2_Zf"/>
</dbReference>
<dbReference type="InterPro" id="IPR049009">
    <property type="entry name" value="ANM3_Znf-C2H2"/>
</dbReference>
<dbReference type="InterPro" id="IPR025799">
    <property type="entry name" value="Arg_MeTrfase"/>
</dbReference>
<dbReference type="InterPro" id="IPR055135">
    <property type="entry name" value="PRMT_dom"/>
</dbReference>
<dbReference type="InterPro" id="IPR029063">
    <property type="entry name" value="SAM-dependent_MTases_sf"/>
</dbReference>
<dbReference type="InterPro" id="IPR036236">
    <property type="entry name" value="Znf_C2H2_sf"/>
</dbReference>
<dbReference type="PANTHER" id="PTHR11006">
    <property type="entry name" value="PROTEIN ARGININE N-METHYLTRANSFERASE"/>
    <property type="match status" value="1"/>
</dbReference>
<dbReference type="PANTHER" id="PTHR11006:SF53">
    <property type="entry name" value="PROTEIN ARGININE N-METHYLTRANSFERASE 3"/>
    <property type="match status" value="1"/>
</dbReference>
<dbReference type="Pfam" id="PF21137">
    <property type="entry name" value="ANM3_C2H2_Zf"/>
    <property type="match status" value="1"/>
</dbReference>
<dbReference type="Pfam" id="PF21336">
    <property type="entry name" value="ANM3_zf-C2H2"/>
    <property type="match status" value="1"/>
</dbReference>
<dbReference type="Pfam" id="PF06325">
    <property type="entry name" value="PrmA"/>
    <property type="match status" value="1"/>
</dbReference>
<dbReference type="Pfam" id="PF22528">
    <property type="entry name" value="PRMT_C"/>
    <property type="match status" value="1"/>
</dbReference>
<dbReference type="SUPFAM" id="SSF57667">
    <property type="entry name" value="beta-beta-alpha zinc fingers"/>
    <property type="match status" value="1"/>
</dbReference>
<dbReference type="SUPFAM" id="SSF53335">
    <property type="entry name" value="S-adenosyl-L-methionine-dependent methyltransferases"/>
    <property type="match status" value="1"/>
</dbReference>
<dbReference type="PROSITE" id="PS51678">
    <property type="entry name" value="SAM_MT_PRMT"/>
    <property type="match status" value="1"/>
</dbReference>
<dbReference type="PROSITE" id="PS00028">
    <property type="entry name" value="ZINC_FINGER_C2H2_1"/>
    <property type="match status" value="1"/>
</dbReference>
<feature type="initiator methionine" description="Removed" evidence="1">
    <location>
        <position position="1"/>
    </location>
</feature>
<feature type="chain" id="PRO_0000212328" description="Protein arginine N-methyltransferase 3">
    <location>
        <begin position="2"/>
        <end position="528"/>
    </location>
</feature>
<feature type="domain" description="SAM-dependent MTase PRMT-type" evidence="3">
    <location>
        <begin position="214"/>
        <end position="528"/>
    </location>
</feature>
<feature type="zinc finger region" description="C2H2-type">
    <location>
        <begin position="46"/>
        <end position="69"/>
    </location>
</feature>
<feature type="region of interest" description="Disordered" evidence="4">
    <location>
        <begin position="1"/>
        <end position="42"/>
    </location>
</feature>
<feature type="region of interest" description="Mediates interaction with ALDH1A1" evidence="1">
    <location>
        <begin position="184"/>
        <end position="528"/>
    </location>
</feature>
<feature type="compositionally biased region" description="Acidic residues" evidence="4">
    <location>
        <begin position="23"/>
        <end position="37"/>
    </location>
</feature>
<feature type="active site" evidence="5">
    <location>
        <position position="326"/>
    </location>
</feature>
<feature type="active site" evidence="5">
    <location>
        <position position="335"/>
    </location>
</feature>
<feature type="binding site" evidence="5 11">
    <location>
        <position position="236"/>
    </location>
    <ligand>
        <name>S-adenosyl-L-homocysteine</name>
        <dbReference type="ChEBI" id="CHEBI:57856"/>
    </ligand>
</feature>
<feature type="binding site" evidence="5 11">
    <location>
        <position position="260"/>
    </location>
    <ligand>
        <name>S-adenosyl-L-homocysteine</name>
        <dbReference type="ChEBI" id="CHEBI:57856"/>
    </ligand>
</feature>
<feature type="binding site" evidence="5 11">
    <location>
        <position position="282"/>
    </location>
    <ligand>
        <name>S-adenosyl-L-homocysteine</name>
        <dbReference type="ChEBI" id="CHEBI:57856"/>
    </ligand>
</feature>
<feature type="binding site" evidence="5 11">
    <location>
        <position position="284"/>
    </location>
    <ligand>
        <name>S-adenosyl-L-homocysteine</name>
        <dbReference type="ChEBI" id="CHEBI:57856"/>
    </ligand>
</feature>
<feature type="binding site" evidence="5 11">
    <location>
        <position position="310"/>
    </location>
    <ligand>
        <name>S-adenosyl-L-homocysteine</name>
        <dbReference type="ChEBI" id="CHEBI:57856"/>
    </ligand>
</feature>
<feature type="binding site" evidence="5 11">
    <location>
        <position position="311"/>
    </location>
    <ligand>
        <name>S-adenosyl-L-homocysteine</name>
        <dbReference type="ChEBI" id="CHEBI:57856"/>
    </ligand>
</feature>
<feature type="modified residue" description="N-acetylcysteine" evidence="1">
    <location>
        <position position="2"/>
    </location>
</feature>
<feature type="modified residue" description="Phosphoserine" evidence="1">
    <location>
        <position position="22"/>
    </location>
</feature>
<feature type="modified residue" description="Phosphoserine" evidence="1">
    <location>
        <position position="24"/>
    </location>
</feature>
<feature type="modified residue" description="Phosphoserine" evidence="1">
    <location>
        <position position="169"/>
    </location>
</feature>
<feature type="strand" evidence="12">
    <location>
        <begin position="210"/>
        <end position="212"/>
    </location>
</feature>
<feature type="helix" evidence="12">
    <location>
        <begin position="215"/>
        <end position="220"/>
    </location>
</feature>
<feature type="strand" evidence="12">
    <location>
        <begin position="222"/>
        <end position="224"/>
    </location>
</feature>
<feature type="helix" evidence="12">
    <location>
        <begin position="225"/>
        <end position="231"/>
    </location>
</feature>
<feature type="helix" evidence="12">
    <location>
        <begin position="234"/>
        <end position="246"/>
    </location>
</feature>
<feature type="helix" evidence="12">
    <location>
        <begin position="248"/>
        <end position="250"/>
    </location>
</feature>
<feature type="turn" evidence="12">
    <location>
        <begin position="251"/>
        <end position="253"/>
    </location>
</feature>
<feature type="strand" evidence="12">
    <location>
        <begin position="255"/>
        <end position="260"/>
    </location>
</feature>
<feature type="helix" evidence="12">
    <location>
        <begin position="265"/>
        <end position="273"/>
    </location>
</feature>
<feature type="strand" evidence="12">
    <location>
        <begin position="276"/>
        <end position="284"/>
    </location>
</feature>
<feature type="helix" evidence="12">
    <location>
        <begin position="286"/>
        <end position="296"/>
    </location>
</feature>
<feature type="turn" evidence="12">
    <location>
        <begin position="300"/>
        <end position="302"/>
    </location>
</feature>
<feature type="strand" evidence="12">
    <location>
        <begin position="303"/>
        <end position="308"/>
    </location>
</feature>
<feature type="turn" evidence="12">
    <location>
        <begin position="310"/>
        <end position="312"/>
    </location>
</feature>
<feature type="strand" evidence="12">
    <location>
        <begin position="316"/>
        <end position="318"/>
    </location>
</feature>
<feature type="strand" evidence="12">
    <location>
        <begin position="320"/>
        <end position="324"/>
    </location>
</feature>
<feature type="turn" evidence="12">
    <location>
        <begin position="333"/>
        <end position="335"/>
    </location>
</feature>
<feature type="helix" evidence="12">
    <location>
        <begin position="337"/>
        <end position="348"/>
    </location>
</feature>
<feature type="strand" evidence="12">
    <location>
        <begin position="349"/>
        <end position="357"/>
    </location>
</feature>
<feature type="strand" evidence="12">
    <location>
        <begin position="359"/>
        <end position="367"/>
    </location>
</feature>
<feature type="helix" evidence="12">
    <location>
        <begin position="370"/>
        <end position="376"/>
    </location>
</feature>
<feature type="helix" evidence="12">
    <location>
        <begin position="378"/>
        <end position="381"/>
    </location>
</feature>
<feature type="helix" evidence="12">
    <location>
        <begin position="389"/>
        <end position="394"/>
    </location>
</feature>
<feature type="turn" evidence="12">
    <location>
        <begin position="395"/>
        <end position="397"/>
    </location>
</feature>
<feature type="strand" evidence="12">
    <location>
        <begin position="400"/>
        <end position="402"/>
    </location>
</feature>
<feature type="helix" evidence="12">
    <location>
        <begin position="406"/>
        <end position="408"/>
    </location>
</feature>
<feature type="strand" evidence="12">
    <location>
        <begin position="414"/>
        <end position="420"/>
    </location>
</feature>
<feature type="turn" evidence="12">
    <location>
        <begin position="421"/>
        <end position="423"/>
    </location>
</feature>
<feature type="helix" evidence="12">
    <location>
        <begin position="426"/>
        <end position="429"/>
    </location>
</feature>
<feature type="strand" evidence="12">
    <location>
        <begin position="430"/>
        <end position="439"/>
    </location>
</feature>
<feature type="strand" evidence="12">
    <location>
        <begin position="443"/>
        <end position="456"/>
    </location>
</feature>
<feature type="strand" evidence="12">
    <location>
        <begin position="464"/>
        <end position="467"/>
    </location>
</feature>
<feature type="strand" evidence="12">
    <location>
        <begin position="479"/>
        <end position="490"/>
    </location>
</feature>
<feature type="strand" evidence="12">
    <location>
        <begin position="495"/>
        <end position="504"/>
    </location>
</feature>
<feature type="strand" evidence="12">
    <location>
        <begin position="511"/>
        <end position="518"/>
    </location>
</feature>
<feature type="strand" evidence="12">
    <location>
        <begin position="521"/>
        <end position="527"/>
    </location>
</feature>
<gene>
    <name evidence="10" type="primary">Prmt3</name>
    <name type="synonym">Hrmt1l3</name>
</gene>
<accession>O70467</accession>
<protein>
    <recommendedName>
        <fullName evidence="9">Protein arginine N-methyltransferase 3</fullName>
        <ecNumber evidence="8">2.1.1.319</ecNumber>
    </recommendedName>
    <alternativeName>
        <fullName>Heterogeneous nuclear ribonucleoprotein methyltransferase-like protein 3</fullName>
    </alternativeName>
</protein>
<comment type="function">
    <text evidence="1 2 5 7 8">Protein-arginine N-methyltransferase that catalyzes both the monomethylation and asymmetric dimethylation of the guanidino nitrogens of arginine residues in target proteins, and therefore falls into the group of type I methyltransferases (PubMed:10899106, PubMed:15334060, PubMed:9642256). Catalyzes the asymmetric arginine dimethylation at multiple sites in the Arg/Gly-rich region of small ribosomal subunit protein uS5/RPS2 (By similarity). Also appears to methylate other ribosomal proteins (By similarity). May regulate retinoic acid synthesis and signaling by inhibiting ALDH1A1 retinal dehydrogenase activity (By similarity). Contributes to methylation of histone H4 'Arg-3', a specific tag for epigenetic transcriptional activation (By similarity). Promotes osteogenesis (By similarity).</text>
</comment>
<comment type="catalytic activity">
    <reaction evidence="8">
        <text>L-arginyl-[protein] + S-adenosyl-L-methionine = N(omega)-methyl-L-arginyl-[protein] + S-adenosyl-L-homocysteine + H(+)</text>
        <dbReference type="Rhea" id="RHEA:48100"/>
        <dbReference type="Rhea" id="RHEA-COMP:10532"/>
        <dbReference type="Rhea" id="RHEA-COMP:11990"/>
        <dbReference type="ChEBI" id="CHEBI:15378"/>
        <dbReference type="ChEBI" id="CHEBI:29965"/>
        <dbReference type="ChEBI" id="CHEBI:57856"/>
        <dbReference type="ChEBI" id="CHEBI:59789"/>
        <dbReference type="ChEBI" id="CHEBI:65280"/>
    </reaction>
    <physiologicalReaction direction="left-to-right" evidence="9">
        <dbReference type="Rhea" id="RHEA:48101"/>
    </physiologicalReaction>
</comment>
<comment type="catalytic activity">
    <reaction evidence="8">
        <text>L-arginyl-[protein] + 2 S-adenosyl-L-methionine = N(omega),N(omega)-dimethyl-L-arginyl-[protein] + 2 S-adenosyl-L-homocysteine + 2 H(+)</text>
        <dbReference type="Rhea" id="RHEA:48096"/>
        <dbReference type="Rhea" id="RHEA-COMP:10532"/>
        <dbReference type="Rhea" id="RHEA-COMP:11991"/>
        <dbReference type="ChEBI" id="CHEBI:15378"/>
        <dbReference type="ChEBI" id="CHEBI:29965"/>
        <dbReference type="ChEBI" id="CHEBI:57856"/>
        <dbReference type="ChEBI" id="CHEBI:59789"/>
        <dbReference type="ChEBI" id="CHEBI:61897"/>
        <dbReference type="EC" id="2.1.1.319"/>
    </reaction>
    <physiologicalReaction direction="left-to-right" evidence="9">
        <dbReference type="Rhea" id="RHEA:48097"/>
    </physiologicalReaction>
</comment>
<comment type="activity regulation">
    <text evidence="6">Inhibited by N-ethylmaleimide and high concentrations of zinc chloride.</text>
</comment>
<comment type="subunit">
    <text evidence="1 5 7 8">Monomer and homodimer (PubMed:10899106, PubMed:9642256). Interacts with EPB41L3 (via FERM domain); the interaction is direct and inhibits the protein-arginine N-methyltransferase activity of PRMT3 (PubMed:15334060). Interacts with the 40S ribosomal protein RPS2 (By similarity). Interacts with ALDH1A1; the interaction is direct, inhibits ALDH1A1 aldehyde dehydrogenase activity and is independent of the methyltransferase activity of PRMT3 (PubMed:15334060).</text>
</comment>
<comment type="subcellular location">
    <subcellularLocation>
        <location evidence="8">Cytoplasm</location>
        <location evidence="8">Cytosol</location>
    </subcellularLocation>
    <subcellularLocation>
        <location evidence="1">Nucleus</location>
    </subcellularLocation>
</comment>
<comment type="tissue specificity">
    <text evidence="8">Ubiquitously expressed.</text>
</comment>
<comment type="domain">
    <text evidence="6">The C2H2-type zinc-finger is responsible for substrate specificity.</text>
</comment>
<comment type="similarity">
    <text evidence="3">Belongs to the class I-like SAM-binding methyltransferase superfamily. Protein arginine N-methyltransferase family.</text>
</comment>
<reference key="1">
    <citation type="journal article" date="1998" name="J. Biol. Chem.">
        <title>PRMT 3, a type I protein arginine N-methyltransferase that differs from PRMT1 in its oligomerization, subcellular localization, substrate specificity, and regulation.</title>
        <authorList>
            <person name="Tang J."/>
            <person name="Gary J.D."/>
            <person name="Clarke S."/>
            <person name="Herschman H.R."/>
        </authorList>
    </citation>
    <scope>NUCLEOTIDE SEQUENCE [MRNA]</scope>
    <scope>FUNCTION</scope>
    <scope>CATALYTIC ACTIVITY</scope>
    <scope>SUBUNIT</scope>
    <scope>SUBCELLULAR LOCATION</scope>
    <scope>TISSUE SPECIFICITY</scope>
</reference>
<reference key="2">
    <citation type="journal article" date="2000" name="J. Biol. Chem.">
        <title>PRMT3 is a distinct member of the protein arginine N-methyltransferase family. Conferral of substrate specificity by a zinc-finger domain.</title>
        <authorList>
            <person name="Frankel A."/>
            <person name="Clarke S."/>
        </authorList>
    </citation>
    <scope>DOMAIN</scope>
    <scope>ACTIVITY REGULATION</scope>
</reference>
<reference key="3">
    <citation type="journal article" date="2004" name="Oncogene">
        <title>DAL-1/4.1B tumor suppressor interacts with protein arginine N-methyltransferase 3 (PRMT3) and inhibits its ability to methylate substrates in vitro and in vivo.</title>
        <authorList>
            <person name="Singh V."/>
            <person name="Miranda T.B."/>
            <person name="Jiang W."/>
            <person name="Frankel A."/>
            <person name="Roemer M.E."/>
            <person name="Robb V.A."/>
            <person name="Gutmann D.H."/>
            <person name="Herschman H.R."/>
            <person name="Clarke S."/>
            <person name="Newsham I.F."/>
        </authorList>
    </citation>
    <scope>FUNCTION</scope>
    <scope>INTERACTION WITH EPB41L3</scope>
</reference>
<reference evidence="11" key="4">
    <citation type="journal article" date="2000" name="EMBO J.">
        <title>Crystal structure of the conserved core of protein arginine methyltransferase PRMT3.</title>
        <authorList>
            <person name="Zhang X."/>
            <person name="Zhou L."/>
            <person name="Cheng X."/>
        </authorList>
    </citation>
    <scope>X-RAY CRYSTALLOGRAPHY (2.0 ANGSTROMS) OF 208-528 IN COMPLEX WITH S-ADENOSYL-L-HOMOCYSTEINE</scope>
    <scope>FUNCTION</scope>
    <scope>ACTIVE SITE</scope>
    <scope>SUBUNIT</scope>
</reference>